<name>RS4A_NITEU</name>
<dbReference type="EMBL" id="AL954747">
    <property type="protein sequence ID" value="CAD84336.1"/>
    <property type="molecule type" value="Genomic_DNA"/>
</dbReference>
<dbReference type="SMR" id="Q82X70"/>
<dbReference type="STRING" id="228410.NE0425"/>
<dbReference type="GeneID" id="87103632"/>
<dbReference type="KEGG" id="neu:NE0425"/>
<dbReference type="eggNOG" id="COG0522">
    <property type="taxonomic scope" value="Bacteria"/>
</dbReference>
<dbReference type="HOGENOM" id="CLU_092403_0_2_4"/>
<dbReference type="OrthoDB" id="9803672at2"/>
<dbReference type="PhylomeDB" id="Q82X70"/>
<dbReference type="Proteomes" id="UP000001416">
    <property type="component" value="Chromosome"/>
</dbReference>
<dbReference type="GO" id="GO:0015935">
    <property type="term" value="C:small ribosomal subunit"/>
    <property type="evidence" value="ECO:0007669"/>
    <property type="project" value="InterPro"/>
</dbReference>
<dbReference type="GO" id="GO:0019843">
    <property type="term" value="F:rRNA binding"/>
    <property type="evidence" value="ECO:0007669"/>
    <property type="project" value="UniProtKB-UniRule"/>
</dbReference>
<dbReference type="GO" id="GO:0003735">
    <property type="term" value="F:structural constituent of ribosome"/>
    <property type="evidence" value="ECO:0007669"/>
    <property type="project" value="InterPro"/>
</dbReference>
<dbReference type="GO" id="GO:0042274">
    <property type="term" value="P:ribosomal small subunit biogenesis"/>
    <property type="evidence" value="ECO:0007669"/>
    <property type="project" value="TreeGrafter"/>
</dbReference>
<dbReference type="GO" id="GO:0006412">
    <property type="term" value="P:translation"/>
    <property type="evidence" value="ECO:0007669"/>
    <property type="project" value="UniProtKB-UniRule"/>
</dbReference>
<dbReference type="CDD" id="cd00165">
    <property type="entry name" value="S4"/>
    <property type="match status" value="1"/>
</dbReference>
<dbReference type="FunFam" id="1.10.1050.10:FF:000001">
    <property type="entry name" value="30S ribosomal protein S4"/>
    <property type="match status" value="1"/>
</dbReference>
<dbReference type="FunFam" id="3.10.290.10:FF:000001">
    <property type="entry name" value="30S ribosomal protein S4"/>
    <property type="match status" value="1"/>
</dbReference>
<dbReference type="Gene3D" id="1.10.1050.10">
    <property type="entry name" value="Ribosomal Protein S4 Delta 41, Chain A, domain 1"/>
    <property type="match status" value="1"/>
</dbReference>
<dbReference type="Gene3D" id="3.10.290.10">
    <property type="entry name" value="RNA-binding S4 domain"/>
    <property type="match status" value="1"/>
</dbReference>
<dbReference type="HAMAP" id="MF_01306_B">
    <property type="entry name" value="Ribosomal_uS4_B"/>
    <property type="match status" value="1"/>
</dbReference>
<dbReference type="InterPro" id="IPR022801">
    <property type="entry name" value="Ribosomal_uS4"/>
</dbReference>
<dbReference type="InterPro" id="IPR005709">
    <property type="entry name" value="Ribosomal_uS4_bac-type"/>
</dbReference>
<dbReference type="InterPro" id="IPR001912">
    <property type="entry name" value="Ribosomal_uS4_N"/>
</dbReference>
<dbReference type="InterPro" id="IPR002942">
    <property type="entry name" value="S4_RNA-bd"/>
</dbReference>
<dbReference type="InterPro" id="IPR036986">
    <property type="entry name" value="S4_RNA-bd_sf"/>
</dbReference>
<dbReference type="NCBIfam" id="NF003717">
    <property type="entry name" value="PRK05327.1"/>
    <property type="match status" value="1"/>
</dbReference>
<dbReference type="NCBIfam" id="TIGR01017">
    <property type="entry name" value="rpsD_bact"/>
    <property type="match status" value="1"/>
</dbReference>
<dbReference type="PANTHER" id="PTHR11831">
    <property type="entry name" value="30S 40S RIBOSOMAL PROTEIN"/>
    <property type="match status" value="1"/>
</dbReference>
<dbReference type="PANTHER" id="PTHR11831:SF4">
    <property type="entry name" value="SMALL RIBOSOMAL SUBUNIT PROTEIN US4M"/>
    <property type="match status" value="1"/>
</dbReference>
<dbReference type="Pfam" id="PF00163">
    <property type="entry name" value="Ribosomal_S4"/>
    <property type="match status" value="1"/>
</dbReference>
<dbReference type="Pfam" id="PF01479">
    <property type="entry name" value="S4"/>
    <property type="match status" value="1"/>
</dbReference>
<dbReference type="SMART" id="SM01390">
    <property type="entry name" value="Ribosomal_S4"/>
    <property type="match status" value="1"/>
</dbReference>
<dbReference type="SMART" id="SM00363">
    <property type="entry name" value="S4"/>
    <property type="match status" value="1"/>
</dbReference>
<dbReference type="SUPFAM" id="SSF55174">
    <property type="entry name" value="Alpha-L RNA-binding motif"/>
    <property type="match status" value="1"/>
</dbReference>
<dbReference type="PROSITE" id="PS50889">
    <property type="entry name" value="S4"/>
    <property type="match status" value="1"/>
</dbReference>
<evidence type="ECO:0000250" key="1"/>
<evidence type="ECO:0000255" key="2">
    <source>
        <dbReference type="HAMAP-Rule" id="MF_01306"/>
    </source>
</evidence>
<evidence type="ECO:0000305" key="3"/>
<comment type="function">
    <text evidence="1">One of the primary rRNA binding proteins, it binds directly to 16S rRNA where it nucleates assembly of the body of the 30S subunit.</text>
</comment>
<comment type="function">
    <text evidence="1">With S5 and S12 plays an important role in translational accuracy.</text>
</comment>
<comment type="subunit">
    <text evidence="1">Part of the 30S ribosomal subunit. Contacts protein S5. The interaction surface between S4 and S5 is involved in control of translational fidelity (By similarity).</text>
</comment>
<comment type="similarity">
    <text evidence="3">Belongs to the universal ribosomal protein uS4 family.</text>
</comment>
<sequence length="208" mass="24004">MARNINPKCRQCRREGEKLFLKGDKCFSDKCPIERRNYPPGQHGQKKVRLSDYAVQLREKQKIRRIYGLLENQFRNVYKRADKQKGVTGDNLLQLLESRLDNVAYNMGFGSSRSEARQIVRHNCVLLNGKRANIPSHLVEPGDLIEIAEHAKSYLRIKASIEAAKRRSIPSWLEVDFDNLKGLYKSKPERSDLSSTINESLVVELYSK</sequence>
<accession>Q82X70</accession>
<proteinExistence type="inferred from homology"/>
<gene>
    <name type="primary">rpsD1</name>
    <name type="ordered locus">NE0425</name>
</gene>
<feature type="chain" id="PRO_0000132425" description="Small ribosomal subunit protein uS4A">
    <location>
        <begin position="1"/>
        <end position="208"/>
    </location>
</feature>
<feature type="domain" description="S4 RNA-binding">
    <location>
        <begin position="98"/>
        <end position="159"/>
    </location>
</feature>
<reference key="1">
    <citation type="journal article" date="2003" name="J. Bacteriol.">
        <title>Complete genome sequence of the ammonia-oxidizing bacterium and obligate chemolithoautotroph Nitrosomonas europaea.</title>
        <authorList>
            <person name="Chain P."/>
            <person name="Lamerdin J.E."/>
            <person name="Larimer F.W."/>
            <person name="Regala W."/>
            <person name="Lao V."/>
            <person name="Land M.L."/>
            <person name="Hauser L."/>
            <person name="Hooper A.B."/>
            <person name="Klotz M.G."/>
            <person name="Norton J."/>
            <person name="Sayavedra-Soto L.A."/>
            <person name="Arciero D.M."/>
            <person name="Hommes N.G."/>
            <person name="Whittaker M.M."/>
            <person name="Arp D.J."/>
        </authorList>
    </citation>
    <scope>NUCLEOTIDE SEQUENCE [LARGE SCALE GENOMIC DNA]</scope>
    <source>
        <strain>ATCC 19718 / CIP 103999 / KCTC 2705 / NBRC 14298</strain>
    </source>
</reference>
<keyword id="KW-1185">Reference proteome</keyword>
<keyword id="KW-0687">Ribonucleoprotein</keyword>
<keyword id="KW-0689">Ribosomal protein</keyword>
<keyword id="KW-0694">RNA-binding</keyword>
<keyword id="KW-0699">rRNA-binding</keyword>
<organism>
    <name type="scientific">Nitrosomonas europaea (strain ATCC 19718 / CIP 103999 / KCTC 2705 / NBRC 14298)</name>
    <dbReference type="NCBI Taxonomy" id="228410"/>
    <lineage>
        <taxon>Bacteria</taxon>
        <taxon>Pseudomonadati</taxon>
        <taxon>Pseudomonadota</taxon>
        <taxon>Betaproteobacteria</taxon>
        <taxon>Nitrosomonadales</taxon>
        <taxon>Nitrosomonadaceae</taxon>
        <taxon>Nitrosomonas</taxon>
    </lineage>
</organism>
<protein>
    <recommendedName>
        <fullName evidence="2">Small ribosomal subunit protein uS4A</fullName>
    </recommendedName>
    <alternativeName>
        <fullName evidence="3">30S ribosomal protein S4 1</fullName>
    </alternativeName>
</protein>